<organism>
    <name type="scientific">Methanothermobacter thermautotrophicus</name>
    <name type="common">Methanobacterium thermoformicicum</name>
    <dbReference type="NCBI Taxonomy" id="145262"/>
    <lineage>
        <taxon>Archaea</taxon>
        <taxon>Methanobacteriati</taxon>
        <taxon>Methanobacteriota</taxon>
        <taxon>Methanomada group</taxon>
        <taxon>Methanobacteria</taxon>
        <taxon>Methanobacteriales</taxon>
        <taxon>Methanobacteriaceae</taxon>
        <taxon>Methanothermobacter</taxon>
    </lineage>
</organism>
<name>MTHT_METTF</name>
<gene>
    <name type="primary">mthTIM</name>
</gene>
<reference key="1">
    <citation type="journal article" date="1992" name="J. Bacteriol.">
        <title>Characterization of the archaeal, plasmid-encoded type II restriction-modification system MthTI from Methanobacterium thermoformicicum THF: homology to the bacterial NgoPII system from Neisseria gonorrhoeae.</title>
        <authorList>
            <person name="Noelling J."/>
            <person name="de Vos W.M."/>
        </authorList>
    </citation>
    <scope>NUCLEOTIDE SEQUENCE [GENOMIC DNA]</scope>
    <scope>FUNCTION</scope>
    <scope>CATALYTIC ACTIVITY</scope>
    <source>
        <strain>DSM 3848 / THF</strain>
    </source>
</reference>
<reference key="2">
    <citation type="journal article" date="1992" name="Nucleic Acids Res.">
        <title>Modular organization of related Archaeal plasmids encoding different restriction-modification systems in Methanobacterium thermoformicicum.</title>
        <authorList>
            <person name="Noelling J."/>
            <person name="van Eeden F.J.M."/>
            <person name="Eggen R.I.L."/>
            <person name="de Vos W.M."/>
        </authorList>
    </citation>
    <scope>NUCLEOTIDE SEQUENCE [GENOMIC DNA]</scope>
    <source>
        <strain>DSM 3848 / THF</strain>
    </source>
</reference>
<reference key="3">
    <citation type="journal article" date="2003" name="Nucleic Acids Res.">
        <title>A nomenclature for restriction enzymes, DNA methyltransferases, homing endonucleases and their genes.</title>
        <authorList>
            <person name="Roberts R.J."/>
            <person name="Belfort M."/>
            <person name="Bestor T."/>
            <person name="Bhagwat A.S."/>
            <person name="Bickle T.A."/>
            <person name="Bitinaite J."/>
            <person name="Blumenthal R.M."/>
            <person name="Degtyarev S.K."/>
            <person name="Dryden D.T."/>
            <person name="Dybvig K."/>
            <person name="Firman K."/>
            <person name="Gromova E.S."/>
            <person name="Gumport R.I."/>
            <person name="Halford S.E."/>
            <person name="Hattman S."/>
            <person name="Heitman J."/>
            <person name="Hornby D.P."/>
            <person name="Janulaitis A."/>
            <person name="Jeltsch A."/>
            <person name="Josephsen J."/>
            <person name="Kiss A."/>
            <person name="Klaenhammer T.R."/>
            <person name="Kobayashi I."/>
            <person name="Kong H."/>
            <person name="Krueger D.H."/>
            <person name="Lacks S."/>
            <person name="Marinus M.G."/>
            <person name="Miyahara M."/>
            <person name="Morgan R.D."/>
            <person name="Murray N.E."/>
            <person name="Nagaraja V."/>
            <person name="Piekarowicz A."/>
            <person name="Pingoud A."/>
            <person name="Raleigh E."/>
            <person name="Rao D.N."/>
            <person name="Reich N."/>
            <person name="Repin V.E."/>
            <person name="Selker E.U."/>
            <person name="Shaw P.C."/>
            <person name="Stein D.C."/>
            <person name="Stoddard B.L."/>
            <person name="Szybalski W."/>
            <person name="Trautner T.A."/>
            <person name="Van Etten J.L."/>
            <person name="Vitor J.M."/>
            <person name="Wilson G.G."/>
            <person name="Xu S.Y."/>
        </authorList>
    </citation>
    <scope>NOMENCLATURE</scope>
</reference>
<evidence type="ECO:0000255" key="1">
    <source>
        <dbReference type="PROSITE-ProRule" id="PRU01016"/>
    </source>
</evidence>
<evidence type="ECO:0000269" key="2">
    <source>
    </source>
</evidence>
<evidence type="ECO:0000303" key="3">
    <source>
    </source>
</evidence>
<evidence type="ECO:0000303" key="4">
    <source>
    </source>
</evidence>
<proteinExistence type="evidence at protein level"/>
<accession>P29567</accession>
<keyword id="KW-0238">DNA-binding</keyword>
<keyword id="KW-0489">Methyltransferase</keyword>
<keyword id="KW-0614">Plasmid</keyword>
<keyword id="KW-0680">Restriction system</keyword>
<keyword id="KW-0949">S-adenosyl-L-methionine</keyword>
<keyword id="KW-0808">Transferase</keyword>
<dbReference type="EC" id="2.1.1.37" evidence="2"/>
<dbReference type="EMBL" id="M97222">
    <property type="protein sequence ID" value="AAA73370.1"/>
    <property type="molecule type" value="Genomic_DNA"/>
</dbReference>
<dbReference type="EMBL" id="X68366">
    <property type="protein sequence ID" value="CAA48436.1"/>
    <property type="molecule type" value="Genomic_DNA"/>
</dbReference>
<dbReference type="PIR" id="B42941">
    <property type="entry name" value="B42941"/>
</dbReference>
<dbReference type="RefSeq" id="NP_039765.1">
    <property type="nucleotide sequence ID" value="NC_001336.1"/>
</dbReference>
<dbReference type="RefSeq" id="WP_010889851.1">
    <property type="nucleotide sequence ID" value="NC_001336.1"/>
</dbReference>
<dbReference type="SMR" id="P29567"/>
<dbReference type="REBASE" id="3448">
    <property type="entry name" value="M.MthTI"/>
</dbReference>
<dbReference type="PRO" id="PR:P29567"/>
<dbReference type="GO" id="GO:0003886">
    <property type="term" value="F:DNA (cytosine-5-)-methyltransferase activity"/>
    <property type="evidence" value="ECO:0007669"/>
    <property type="project" value="UniProtKB-EC"/>
</dbReference>
<dbReference type="GO" id="GO:0003677">
    <property type="term" value="F:DNA binding"/>
    <property type="evidence" value="ECO:0007669"/>
    <property type="project" value="UniProtKB-KW"/>
</dbReference>
<dbReference type="GO" id="GO:0009307">
    <property type="term" value="P:DNA restriction-modification system"/>
    <property type="evidence" value="ECO:0007669"/>
    <property type="project" value="UniProtKB-KW"/>
</dbReference>
<dbReference type="GO" id="GO:0032259">
    <property type="term" value="P:methylation"/>
    <property type="evidence" value="ECO:0007669"/>
    <property type="project" value="UniProtKB-KW"/>
</dbReference>
<dbReference type="GO" id="GO:0044027">
    <property type="term" value="P:negative regulation of gene expression via chromosomal CpG island methylation"/>
    <property type="evidence" value="ECO:0007669"/>
    <property type="project" value="TreeGrafter"/>
</dbReference>
<dbReference type="CDD" id="cd00315">
    <property type="entry name" value="Cyt_C5_DNA_methylase"/>
    <property type="match status" value="1"/>
</dbReference>
<dbReference type="Gene3D" id="3.90.120.10">
    <property type="entry name" value="DNA Methylase, subunit A, domain 2"/>
    <property type="match status" value="1"/>
</dbReference>
<dbReference type="Gene3D" id="3.40.50.150">
    <property type="entry name" value="Vaccinia Virus protein VP39"/>
    <property type="match status" value="1"/>
</dbReference>
<dbReference type="InterPro" id="IPR050390">
    <property type="entry name" value="C5-Methyltransferase"/>
</dbReference>
<dbReference type="InterPro" id="IPR001525">
    <property type="entry name" value="C5_MeTfrase"/>
</dbReference>
<dbReference type="InterPro" id="IPR031303">
    <property type="entry name" value="C5_meth_CS"/>
</dbReference>
<dbReference type="InterPro" id="IPR029063">
    <property type="entry name" value="SAM-dependent_MTases_sf"/>
</dbReference>
<dbReference type="NCBIfam" id="TIGR00675">
    <property type="entry name" value="dcm"/>
    <property type="match status" value="1"/>
</dbReference>
<dbReference type="PANTHER" id="PTHR10629">
    <property type="entry name" value="CYTOSINE-SPECIFIC METHYLTRANSFERASE"/>
    <property type="match status" value="1"/>
</dbReference>
<dbReference type="PANTHER" id="PTHR10629:SF52">
    <property type="entry name" value="DNA (CYTOSINE-5)-METHYLTRANSFERASE 1"/>
    <property type="match status" value="1"/>
</dbReference>
<dbReference type="Pfam" id="PF00145">
    <property type="entry name" value="DNA_methylase"/>
    <property type="match status" value="1"/>
</dbReference>
<dbReference type="PRINTS" id="PR00105">
    <property type="entry name" value="C5METTRFRASE"/>
</dbReference>
<dbReference type="SUPFAM" id="SSF53335">
    <property type="entry name" value="S-adenosyl-L-methionine-dependent methyltransferases"/>
    <property type="match status" value="1"/>
</dbReference>
<dbReference type="PROSITE" id="PS00095">
    <property type="entry name" value="C5_MTASE_2"/>
    <property type="match status" value="1"/>
</dbReference>
<dbReference type="PROSITE" id="PS51679">
    <property type="entry name" value="SAM_MT_C5"/>
    <property type="match status" value="1"/>
</dbReference>
<comment type="function">
    <text evidence="2 3">A methylase that recognizes the double-stranded sequence 5'-GGCC-3', methylates C-3 on both strands, and protects the DNA from cleavage by the MthTI endonuclease.</text>
</comment>
<comment type="catalytic activity">
    <reaction evidence="2">
        <text>a 2'-deoxycytidine in DNA + S-adenosyl-L-methionine = a 5-methyl-2'-deoxycytidine in DNA + S-adenosyl-L-homocysteine + H(+)</text>
        <dbReference type="Rhea" id="RHEA:13681"/>
        <dbReference type="Rhea" id="RHEA-COMP:11369"/>
        <dbReference type="Rhea" id="RHEA-COMP:11370"/>
        <dbReference type="ChEBI" id="CHEBI:15378"/>
        <dbReference type="ChEBI" id="CHEBI:57856"/>
        <dbReference type="ChEBI" id="CHEBI:59789"/>
        <dbReference type="ChEBI" id="CHEBI:85452"/>
        <dbReference type="ChEBI" id="CHEBI:85454"/>
        <dbReference type="EC" id="2.1.1.37"/>
    </reaction>
</comment>
<comment type="similarity">
    <text evidence="1">Belongs to the class I-like SAM-binding methyltransferase superfamily. C5-methyltransferase family.</text>
</comment>
<geneLocation type="plasmid">
    <name>pFV1</name>
</geneLocation>
<sequence length="330" mass="37360">MNMDIASFFSGAGGLDLGFTKAGFNIVFANDNWKGCWKTFEKNHGIKINKKPIEWLKPSEIPDVVGFIGGPPCQSWSLAGSMCGADDPRGKTFYAYVDLVKEKDPLFFLAENVPGIVSRTHLPEFKRLVNSFIDIGYNVEYKVLNAKDYGVPQDRKRVFIVGYREDLNLKFEFPKPLNKKVTLRDAIGDLPEPKPALEKNRSNGENLEVPNHEYMTGTFSSRYMSRNRVRSWDEVSFTIQAGGRHAPCHPQANKMIKVGPDKFIFDPESPKPYRRLSVRECARIQGFPDDFIFYYKNVADGYTMVGNAVPVKLAEELAKKIKKDLEGVLN</sequence>
<feature type="chain" id="PRO_0000087894" description="Type II methyltransferase M.MthTI">
    <location>
        <begin position="1"/>
        <end position="330"/>
    </location>
</feature>
<feature type="domain" description="SAM-dependent MTase C5-type" evidence="1">
    <location>
        <begin position="3"/>
        <end position="328"/>
    </location>
</feature>
<feature type="active site" evidence="1">
    <location>
        <position position="73"/>
    </location>
</feature>
<protein>
    <recommendedName>
        <fullName evidence="3">Type II methyltransferase M.MthTI</fullName>
        <shortName evidence="4">M.MthTI</shortName>
        <ecNumber evidence="2">2.1.1.37</ecNumber>
    </recommendedName>
    <alternativeName>
        <fullName>Cytosine-specific methyltransferase MthTI</fullName>
    </alternativeName>
    <alternativeName>
        <fullName>Modification methylase MthTI</fullName>
    </alternativeName>
</protein>